<reference key="1">
    <citation type="submission" date="2007-05" db="EMBL/GenBank/DDBJ databases">
        <title>Complete sequence of Thermotoga petrophila RKU-1.</title>
        <authorList>
            <consortium name="US DOE Joint Genome Institute"/>
            <person name="Copeland A."/>
            <person name="Lucas S."/>
            <person name="Lapidus A."/>
            <person name="Barry K."/>
            <person name="Glavina del Rio T."/>
            <person name="Dalin E."/>
            <person name="Tice H."/>
            <person name="Pitluck S."/>
            <person name="Sims D."/>
            <person name="Brettin T."/>
            <person name="Bruce D."/>
            <person name="Detter J.C."/>
            <person name="Han C."/>
            <person name="Tapia R."/>
            <person name="Schmutz J."/>
            <person name="Larimer F."/>
            <person name="Land M."/>
            <person name="Hauser L."/>
            <person name="Kyrpides N."/>
            <person name="Mikhailova N."/>
            <person name="Nelson K."/>
            <person name="Gogarten J.P."/>
            <person name="Noll K."/>
            <person name="Richardson P."/>
        </authorList>
    </citation>
    <scope>NUCLEOTIDE SEQUENCE [LARGE SCALE GENOMIC DNA]</scope>
    <source>
        <strain>ATCC BAA-488 / DSM 13995 / JCM 10881 / RKU-1</strain>
    </source>
</reference>
<proteinExistence type="inferred from homology"/>
<comment type="function">
    <text evidence="1">Located on the platform of the 30S subunit, it bridges several disparate RNA helices of the 16S rRNA. Forms part of the Shine-Dalgarno cleft in the 70S ribosome.</text>
</comment>
<comment type="subunit">
    <text evidence="1">Part of the 30S ribosomal subunit. Interacts with proteins S7 and S18. Binds to IF-3.</text>
</comment>
<comment type="similarity">
    <text evidence="1">Belongs to the universal ribosomal protein uS11 family.</text>
</comment>
<protein>
    <recommendedName>
        <fullName evidence="1">Small ribosomal subunit protein uS11</fullName>
    </recommendedName>
    <alternativeName>
        <fullName evidence="2">30S ribosomal protein S11</fullName>
    </alternativeName>
</protein>
<evidence type="ECO:0000255" key="1">
    <source>
        <dbReference type="HAMAP-Rule" id="MF_01310"/>
    </source>
</evidence>
<evidence type="ECO:0000305" key="2"/>
<sequence length="130" mass="14134">MARKRGSSSRKQKKVGFDYGVVHIKSTFNNTIITLTDKDGNTLTWASGGTVGFEGTRKGTPYAAQLAADKVAREALRMGIKKVDILVKGPGPGREPAIRTLQGAGLEINQIKDVTPIPFNGCRPKKRRRV</sequence>
<name>RS11_THEP1</name>
<dbReference type="EMBL" id="CP000702">
    <property type="protein sequence ID" value="ABQ47332.1"/>
    <property type="molecule type" value="Genomic_DNA"/>
</dbReference>
<dbReference type="RefSeq" id="WP_011943800.1">
    <property type="nucleotide sequence ID" value="NC_009486.1"/>
</dbReference>
<dbReference type="SMR" id="A5IMA9"/>
<dbReference type="STRING" id="390874.Tpet_1318"/>
<dbReference type="KEGG" id="tpt:Tpet_1318"/>
<dbReference type="eggNOG" id="COG0100">
    <property type="taxonomic scope" value="Bacteria"/>
</dbReference>
<dbReference type="HOGENOM" id="CLU_072439_5_0_0"/>
<dbReference type="Proteomes" id="UP000006558">
    <property type="component" value="Chromosome"/>
</dbReference>
<dbReference type="GO" id="GO:1990904">
    <property type="term" value="C:ribonucleoprotein complex"/>
    <property type="evidence" value="ECO:0007669"/>
    <property type="project" value="UniProtKB-KW"/>
</dbReference>
<dbReference type="GO" id="GO:0005840">
    <property type="term" value="C:ribosome"/>
    <property type="evidence" value="ECO:0007669"/>
    <property type="project" value="UniProtKB-KW"/>
</dbReference>
<dbReference type="GO" id="GO:0019843">
    <property type="term" value="F:rRNA binding"/>
    <property type="evidence" value="ECO:0007669"/>
    <property type="project" value="UniProtKB-UniRule"/>
</dbReference>
<dbReference type="GO" id="GO:0003735">
    <property type="term" value="F:structural constituent of ribosome"/>
    <property type="evidence" value="ECO:0007669"/>
    <property type="project" value="InterPro"/>
</dbReference>
<dbReference type="GO" id="GO:0006412">
    <property type="term" value="P:translation"/>
    <property type="evidence" value="ECO:0007669"/>
    <property type="project" value="UniProtKB-UniRule"/>
</dbReference>
<dbReference type="FunFam" id="3.30.420.80:FF:000001">
    <property type="entry name" value="30S ribosomal protein S11"/>
    <property type="match status" value="1"/>
</dbReference>
<dbReference type="Gene3D" id="3.30.420.80">
    <property type="entry name" value="Ribosomal protein S11"/>
    <property type="match status" value="1"/>
</dbReference>
<dbReference type="HAMAP" id="MF_01310">
    <property type="entry name" value="Ribosomal_uS11"/>
    <property type="match status" value="1"/>
</dbReference>
<dbReference type="InterPro" id="IPR001971">
    <property type="entry name" value="Ribosomal_uS11"/>
</dbReference>
<dbReference type="InterPro" id="IPR019981">
    <property type="entry name" value="Ribosomal_uS11_bac-type"/>
</dbReference>
<dbReference type="InterPro" id="IPR018102">
    <property type="entry name" value="Ribosomal_uS11_CS"/>
</dbReference>
<dbReference type="InterPro" id="IPR036967">
    <property type="entry name" value="Ribosomal_uS11_sf"/>
</dbReference>
<dbReference type="NCBIfam" id="NF003698">
    <property type="entry name" value="PRK05309.1"/>
    <property type="match status" value="1"/>
</dbReference>
<dbReference type="NCBIfam" id="TIGR03632">
    <property type="entry name" value="uS11_bact"/>
    <property type="match status" value="1"/>
</dbReference>
<dbReference type="PANTHER" id="PTHR11759">
    <property type="entry name" value="40S RIBOSOMAL PROTEIN S14/30S RIBOSOMAL PROTEIN S11"/>
    <property type="match status" value="1"/>
</dbReference>
<dbReference type="Pfam" id="PF00411">
    <property type="entry name" value="Ribosomal_S11"/>
    <property type="match status" value="1"/>
</dbReference>
<dbReference type="PIRSF" id="PIRSF002131">
    <property type="entry name" value="Ribosomal_S11"/>
    <property type="match status" value="1"/>
</dbReference>
<dbReference type="SUPFAM" id="SSF53137">
    <property type="entry name" value="Translational machinery components"/>
    <property type="match status" value="1"/>
</dbReference>
<dbReference type="PROSITE" id="PS00054">
    <property type="entry name" value="RIBOSOMAL_S11"/>
    <property type="match status" value="1"/>
</dbReference>
<gene>
    <name evidence="1" type="primary">rpsK</name>
    <name type="ordered locus">Tpet_1318</name>
</gene>
<organism>
    <name type="scientific">Thermotoga petrophila (strain ATCC BAA-488 / DSM 13995 / JCM 10881 / RKU-1)</name>
    <dbReference type="NCBI Taxonomy" id="390874"/>
    <lineage>
        <taxon>Bacteria</taxon>
        <taxon>Thermotogati</taxon>
        <taxon>Thermotogota</taxon>
        <taxon>Thermotogae</taxon>
        <taxon>Thermotogales</taxon>
        <taxon>Thermotogaceae</taxon>
        <taxon>Thermotoga</taxon>
    </lineage>
</organism>
<feature type="chain" id="PRO_1000051862" description="Small ribosomal subunit protein uS11">
    <location>
        <begin position="1"/>
        <end position="130"/>
    </location>
</feature>
<accession>A5IMA9</accession>
<keyword id="KW-0687">Ribonucleoprotein</keyword>
<keyword id="KW-0689">Ribosomal protein</keyword>
<keyword id="KW-0694">RNA-binding</keyword>
<keyword id="KW-0699">rRNA-binding</keyword>